<protein>
    <recommendedName>
        <fullName evidence="2">Putative transcription factor phnE</fullName>
    </recommendedName>
    <alternativeName>
        <fullName evidence="2">Phenalenone biosynthesis cluster protein E</fullName>
    </alternativeName>
</protein>
<comment type="function">
    <text evidence="3">Putative transcription factor that may be involved in the regulation of the expression of the gene cluster that mediates the biosynthesis of phenalenones such as herqueinone, compounds that have been reported to treat tumors, bacterial infections and/or mycoses, and rheumatic diseases.</text>
</comment>
<comment type="subcellular location">
    <subcellularLocation>
        <location evidence="3">Nucleus</location>
    </subcellularLocation>
</comment>
<gene>
    <name evidence="2" type="primary">phnE</name>
</gene>
<feature type="chain" id="PRO_0000446166" description="Putative transcription factor phnE">
    <location>
        <begin position="1"/>
        <end position="815"/>
    </location>
</feature>
<feature type="region of interest" description="Disordered" evidence="1">
    <location>
        <begin position="522"/>
        <end position="577"/>
    </location>
</feature>
<feature type="compositionally biased region" description="Low complexity" evidence="1">
    <location>
        <begin position="523"/>
        <end position="547"/>
    </location>
</feature>
<feature type="compositionally biased region" description="Pro residues" evidence="1">
    <location>
        <begin position="548"/>
        <end position="559"/>
    </location>
</feature>
<feature type="compositionally biased region" description="Low complexity" evidence="1">
    <location>
        <begin position="563"/>
        <end position="577"/>
    </location>
</feature>
<accession>A0A142C7A3</accession>
<reference key="1">
    <citation type="journal article" date="2016" name="J. Am. Chem. Soc.">
        <title>Phenalenone polyketide cyclization catalyzed by fungal polyketide synthase and flavin-dependent monooxygenase.</title>
        <authorList>
            <person name="Gao S.S."/>
            <person name="Duan A."/>
            <person name="Xu W."/>
            <person name="Yu P."/>
            <person name="Hang L."/>
            <person name="Houk K.N."/>
            <person name="Tang Y."/>
        </authorList>
    </citation>
    <scope>NUCLEOTIDE SEQUENCE [GENOMIC DNA]</scope>
    <scope>FUNCTION</scope>
    <scope>PATHWAY</scope>
    <source>
        <strain>ATCC 10118 / CBS 336.48 / NBRC 31747 / NRRL 1040</strain>
    </source>
</reference>
<name>PHNE_PENHR</name>
<evidence type="ECO:0000256" key="1">
    <source>
        <dbReference type="SAM" id="MobiDB-lite"/>
    </source>
</evidence>
<evidence type="ECO:0000303" key="2">
    <source>
    </source>
</evidence>
<evidence type="ECO:0000305" key="3">
    <source>
    </source>
</evidence>
<organism>
    <name type="scientific">Penicillium herquei</name>
    <dbReference type="NCBI Taxonomy" id="69774"/>
    <lineage>
        <taxon>Eukaryota</taxon>
        <taxon>Fungi</taxon>
        <taxon>Dikarya</taxon>
        <taxon>Ascomycota</taxon>
        <taxon>Pezizomycotina</taxon>
        <taxon>Eurotiomycetes</taxon>
        <taxon>Eurotiomycetidae</taxon>
        <taxon>Eurotiales</taxon>
        <taxon>Aspergillaceae</taxon>
        <taxon>Penicillium</taxon>
    </lineage>
</organism>
<sequence>MSGGAISIFGELNAHTYLGKAFFSSINYKIHQWPECRRRLGRRLMGPAQAAGPGKSSVDERNPNAAAATEINTNASIPLLQRECESFDEIQDRLTMMQDQLSRLTATLDNKQNLVDRVDQIGDKQSSMPTPPSTGHVVSDVDGQIQRYHGPWTLLAQCRQLESDLASWSKADHAAEVASLVTSMVQETMRVPSSSLSSFHTEIPGMGMCLPPRQLLSVMVECFLKNADYATSIFDHQSLYCAIDRVYRDPSNPEEKPWVLCFNLIILLTLGAEHSLQSEDPFVRPMLQAVQTAAGNSRLLMEPRLVSVQALALFSLFMQQCYPDNEPLGDGIFAQACVLARQMGLPQPHGYAATPSTLTAAEVDERHRVYQSLYIRNRYATTTSGALMWLPNSIMCTGTASAVGAHWELAKLQDEIHRVLGSCSFGSSDRRIKVAQLREKLRVWQEACLVAETQPMSMDRVILCLLFLGTRIYISMDNKETDTESFLDDCRLSCLLLIVSCTKHLRPDFSNQFHHLLRRLNPSRRNSDGSAHSSPSSTPSSSSTSSPLPSPASERPPPLDVVTRPSTGTSTPSSPTLLPLPRLANAFPITAIFILARHILGISAEGKPINTHRTVTEINSDILLLESLLFCFQNNPPFLGGKDQTLHCSYKLGQVLDHLVRIVHTMTSDRTSPRAHASGLPLVTEHAEMTDYMSRMFMTSKGSPASDLTGLWYPRDVTSDTPMELSIPDFQSVWPTPQDSLASSTNPLATAEGSIYTPALHPTPIIPNTPLDLSELFGFTNSDASEVWNLGTETTDLLENRRPSLKRQRTHFESQ</sequence>
<keyword id="KW-0539">Nucleus</keyword>
<keyword id="KW-0804">Transcription</keyword>
<keyword id="KW-0805">Transcription regulation</keyword>
<proteinExistence type="predicted"/>
<dbReference type="EMBL" id="KU641630">
    <property type="protein sequence ID" value="AMP46755.1"/>
    <property type="molecule type" value="Genomic_DNA"/>
</dbReference>
<dbReference type="GO" id="GO:0005634">
    <property type="term" value="C:nucleus"/>
    <property type="evidence" value="ECO:0007669"/>
    <property type="project" value="UniProtKB-SubCell"/>
</dbReference>
<dbReference type="GO" id="GO:0003700">
    <property type="term" value="F:DNA-binding transcription factor activity"/>
    <property type="evidence" value="ECO:0007669"/>
    <property type="project" value="InterPro"/>
</dbReference>
<dbReference type="CDD" id="cd12148">
    <property type="entry name" value="fungal_TF_MHR"/>
    <property type="match status" value="1"/>
</dbReference>
<dbReference type="InterPro" id="IPR050987">
    <property type="entry name" value="AtrR-like"/>
</dbReference>
<dbReference type="PANTHER" id="PTHR46910">
    <property type="entry name" value="TRANSCRIPTION FACTOR PDR1"/>
    <property type="match status" value="1"/>
</dbReference>
<dbReference type="PANTHER" id="PTHR46910:SF33">
    <property type="entry name" value="ZN(II)2CYS6 TRANSCRIPTION FACTOR (EUROFUNG)"/>
    <property type="match status" value="1"/>
</dbReference>